<organism>
    <name type="scientific">Stutzerimonas stutzeri (strain A1501)</name>
    <name type="common">Pseudomonas stutzeri</name>
    <dbReference type="NCBI Taxonomy" id="379731"/>
    <lineage>
        <taxon>Bacteria</taxon>
        <taxon>Pseudomonadati</taxon>
        <taxon>Pseudomonadota</taxon>
        <taxon>Gammaproteobacteria</taxon>
        <taxon>Pseudomonadales</taxon>
        <taxon>Pseudomonadaceae</taxon>
        <taxon>Stutzerimonas</taxon>
    </lineage>
</organism>
<accession>A4VHK0</accession>
<comment type="function">
    <text evidence="1">Catalyzes the transfer of the phosphoribosyl group of 5-phosphorylribose-1-pyrophosphate (PRPP) to anthranilate to yield N-(5'-phosphoribosyl)-anthranilate (PRA).</text>
</comment>
<comment type="catalytic activity">
    <reaction evidence="1">
        <text>N-(5-phospho-beta-D-ribosyl)anthranilate + diphosphate = 5-phospho-alpha-D-ribose 1-diphosphate + anthranilate</text>
        <dbReference type="Rhea" id="RHEA:11768"/>
        <dbReference type="ChEBI" id="CHEBI:16567"/>
        <dbReference type="ChEBI" id="CHEBI:18277"/>
        <dbReference type="ChEBI" id="CHEBI:33019"/>
        <dbReference type="ChEBI" id="CHEBI:58017"/>
        <dbReference type="EC" id="2.4.2.18"/>
    </reaction>
</comment>
<comment type="cofactor">
    <cofactor evidence="1">
        <name>Mg(2+)</name>
        <dbReference type="ChEBI" id="CHEBI:18420"/>
    </cofactor>
    <text evidence="1">Binds 2 magnesium ions per monomer.</text>
</comment>
<comment type="pathway">
    <text evidence="1">Amino-acid biosynthesis; L-tryptophan biosynthesis; L-tryptophan from chorismate: step 2/5.</text>
</comment>
<comment type="subunit">
    <text evidence="1">Homodimer.</text>
</comment>
<comment type="similarity">
    <text evidence="1">Belongs to the anthranilate phosphoribosyltransferase family.</text>
</comment>
<protein>
    <recommendedName>
        <fullName evidence="1">Anthranilate phosphoribosyltransferase</fullName>
        <ecNumber evidence="1">2.4.2.18</ecNumber>
    </recommendedName>
</protein>
<evidence type="ECO:0000255" key="1">
    <source>
        <dbReference type="HAMAP-Rule" id="MF_00211"/>
    </source>
</evidence>
<keyword id="KW-0028">Amino-acid biosynthesis</keyword>
<keyword id="KW-0057">Aromatic amino acid biosynthesis</keyword>
<keyword id="KW-0328">Glycosyltransferase</keyword>
<keyword id="KW-0460">Magnesium</keyword>
<keyword id="KW-0479">Metal-binding</keyword>
<keyword id="KW-1185">Reference proteome</keyword>
<keyword id="KW-0808">Transferase</keyword>
<keyword id="KW-0822">Tryptophan biosynthesis</keyword>
<feature type="chain" id="PRO_1000043052" description="Anthranilate phosphoribosyltransferase">
    <location>
        <begin position="1"/>
        <end position="348"/>
    </location>
</feature>
<feature type="binding site" evidence="1">
    <location>
        <position position="81"/>
    </location>
    <ligand>
        <name>5-phospho-alpha-D-ribose 1-diphosphate</name>
        <dbReference type="ChEBI" id="CHEBI:58017"/>
    </ligand>
</feature>
<feature type="binding site" evidence="1">
    <location>
        <position position="81"/>
    </location>
    <ligand>
        <name>anthranilate</name>
        <dbReference type="ChEBI" id="CHEBI:16567"/>
        <label>1</label>
    </ligand>
</feature>
<feature type="binding site" evidence="1">
    <location>
        <begin position="84"/>
        <end position="85"/>
    </location>
    <ligand>
        <name>5-phospho-alpha-D-ribose 1-diphosphate</name>
        <dbReference type="ChEBI" id="CHEBI:58017"/>
    </ligand>
</feature>
<feature type="binding site" evidence="1">
    <location>
        <begin position="91"/>
        <end position="94"/>
    </location>
    <ligand>
        <name>5-phospho-alpha-D-ribose 1-diphosphate</name>
        <dbReference type="ChEBI" id="CHEBI:58017"/>
    </ligand>
</feature>
<feature type="binding site" evidence="1">
    <location>
        <position position="93"/>
    </location>
    <ligand>
        <name>Mg(2+)</name>
        <dbReference type="ChEBI" id="CHEBI:18420"/>
        <label>1</label>
    </ligand>
</feature>
<feature type="binding site" evidence="1">
    <location>
        <begin position="109"/>
        <end position="117"/>
    </location>
    <ligand>
        <name>5-phospho-alpha-D-ribose 1-diphosphate</name>
        <dbReference type="ChEBI" id="CHEBI:58017"/>
    </ligand>
</feature>
<feature type="binding site" evidence="1">
    <location>
        <position position="112"/>
    </location>
    <ligand>
        <name>anthranilate</name>
        <dbReference type="ChEBI" id="CHEBI:16567"/>
        <label>1</label>
    </ligand>
</feature>
<feature type="binding site" evidence="1">
    <location>
        <position position="121"/>
    </location>
    <ligand>
        <name>5-phospho-alpha-D-ribose 1-diphosphate</name>
        <dbReference type="ChEBI" id="CHEBI:58017"/>
    </ligand>
</feature>
<feature type="binding site" evidence="1">
    <location>
        <position position="167"/>
    </location>
    <ligand>
        <name>anthranilate</name>
        <dbReference type="ChEBI" id="CHEBI:16567"/>
        <label>2</label>
    </ligand>
</feature>
<feature type="binding site" evidence="1">
    <location>
        <position position="226"/>
    </location>
    <ligand>
        <name>Mg(2+)</name>
        <dbReference type="ChEBI" id="CHEBI:18420"/>
        <label>2</label>
    </ligand>
</feature>
<feature type="binding site" evidence="1">
    <location>
        <position position="227"/>
    </location>
    <ligand>
        <name>Mg(2+)</name>
        <dbReference type="ChEBI" id="CHEBI:18420"/>
        <label>1</label>
    </ligand>
</feature>
<feature type="binding site" evidence="1">
    <location>
        <position position="227"/>
    </location>
    <ligand>
        <name>Mg(2+)</name>
        <dbReference type="ChEBI" id="CHEBI:18420"/>
        <label>2</label>
    </ligand>
</feature>
<name>TRPD_STUS1</name>
<proteinExistence type="inferred from homology"/>
<gene>
    <name evidence="1" type="primary">trpD</name>
    <name type="ordered locus">PST_0746</name>
</gene>
<sequence length="348" mass="36933">MDIKEALNRIVGQLDLTTEEMQAVMRQIMTGQCTDAQVGAFLMGMRMKSETIDEIVGAVQVMRELAAPVRFDTDKLVDTCGTGGDGMNIFNVSTAASFVVAAAGGKVAKHGNRAVSGKSGSADLLEAAGVFLDLTPEQVARSVDTVGVGFMFAPAHHGAMKYAAGPRRELGLRTLFNILGPMANPAGVRHQVLGVFSKALCRPMAEVLSRLGSKHVLVVHAQDGLDEISLAAPTHVAELKDGEIREYSIQPEDFGIKSQSLIGLNVEDAQGSLALIRDALGRRKSENGQKAADMIVLNAGAALYAADVATTLKQGVEMAHDALCSGIARDKLEELVSFTAVFKQENQK</sequence>
<dbReference type="EC" id="2.4.2.18" evidence="1"/>
<dbReference type="EMBL" id="CP000304">
    <property type="protein sequence ID" value="ABP78451.1"/>
    <property type="molecule type" value="Genomic_DNA"/>
</dbReference>
<dbReference type="RefSeq" id="WP_011911958.1">
    <property type="nucleotide sequence ID" value="NC_009434.1"/>
</dbReference>
<dbReference type="SMR" id="A4VHK0"/>
<dbReference type="GeneID" id="66819886"/>
<dbReference type="KEGG" id="psa:PST_0746"/>
<dbReference type="eggNOG" id="COG0547">
    <property type="taxonomic scope" value="Bacteria"/>
</dbReference>
<dbReference type="HOGENOM" id="CLU_034315_2_1_6"/>
<dbReference type="UniPathway" id="UPA00035">
    <property type="reaction ID" value="UER00041"/>
</dbReference>
<dbReference type="Proteomes" id="UP000000233">
    <property type="component" value="Chromosome"/>
</dbReference>
<dbReference type="GO" id="GO:0005829">
    <property type="term" value="C:cytosol"/>
    <property type="evidence" value="ECO:0007669"/>
    <property type="project" value="TreeGrafter"/>
</dbReference>
<dbReference type="GO" id="GO:0004048">
    <property type="term" value="F:anthranilate phosphoribosyltransferase activity"/>
    <property type="evidence" value="ECO:0007669"/>
    <property type="project" value="UniProtKB-UniRule"/>
</dbReference>
<dbReference type="GO" id="GO:0000287">
    <property type="term" value="F:magnesium ion binding"/>
    <property type="evidence" value="ECO:0007669"/>
    <property type="project" value="UniProtKB-UniRule"/>
</dbReference>
<dbReference type="GO" id="GO:0000162">
    <property type="term" value="P:L-tryptophan biosynthetic process"/>
    <property type="evidence" value="ECO:0007669"/>
    <property type="project" value="UniProtKB-UniRule"/>
</dbReference>
<dbReference type="FunFam" id="1.20.970.10:FF:000006">
    <property type="entry name" value="Anthranilate phosphoribosyltransferase"/>
    <property type="match status" value="1"/>
</dbReference>
<dbReference type="FunFam" id="3.40.1030.10:FF:000002">
    <property type="entry name" value="Anthranilate phosphoribosyltransferase"/>
    <property type="match status" value="1"/>
</dbReference>
<dbReference type="Gene3D" id="3.40.1030.10">
    <property type="entry name" value="Nucleoside phosphorylase/phosphoribosyltransferase catalytic domain"/>
    <property type="match status" value="1"/>
</dbReference>
<dbReference type="Gene3D" id="1.20.970.10">
    <property type="entry name" value="Transferase, Pyrimidine Nucleoside Phosphorylase, Chain C"/>
    <property type="match status" value="1"/>
</dbReference>
<dbReference type="HAMAP" id="MF_00211">
    <property type="entry name" value="TrpD"/>
    <property type="match status" value="1"/>
</dbReference>
<dbReference type="InterPro" id="IPR005940">
    <property type="entry name" value="Anthranilate_Pribosyl_Tfrase"/>
</dbReference>
<dbReference type="InterPro" id="IPR000312">
    <property type="entry name" value="Glycosyl_Trfase_fam3"/>
</dbReference>
<dbReference type="InterPro" id="IPR017459">
    <property type="entry name" value="Glycosyl_Trfase_fam3_N_dom"/>
</dbReference>
<dbReference type="InterPro" id="IPR036320">
    <property type="entry name" value="Glycosyl_Trfase_fam3_N_dom_sf"/>
</dbReference>
<dbReference type="InterPro" id="IPR035902">
    <property type="entry name" value="Nuc_phospho_transferase"/>
</dbReference>
<dbReference type="NCBIfam" id="TIGR01245">
    <property type="entry name" value="trpD"/>
    <property type="match status" value="1"/>
</dbReference>
<dbReference type="PANTHER" id="PTHR43285">
    <property type="entry name" value="ANTHRANILATE PHOSPHORIBOSYLTRANSFERASE"/>
    <property type="match status" value="1"/>
</dbReference>
<dbReference type="PANTHER" id="PTHR43285:SF2">
    <property type="entry name" value="ANTHRANILATE PHOSPHORIBOSYLTRANSFERASE"/>
    <property type="match status" value="1"/>
</dbReference>
<dbReference type="Pfam" id="PF02885">
    <property type="entry name" value="Glycos_trans_3N"/>
    <property type="match status" value="1"/>
</dbReference>
<dbReference type="Pfam" id="PF00591">
    <property type="entry name" value="Glycos_transf_3"/>
    <property type="match status" value="1"/>
</dbReference>
<dbReference type="SUPFAM" id="SSF52418">
    <property type="entry name" value="Nucleoside phosphorylase/phosphoribosyltransferase catalytic domain"/>
    <property type="match status" value="1"/>
</dbReference>
<dbReference type="SUPFAM" id="SSF47648">
    <property type="entry name" value="Nucleoside phosphorylase/phosphoribosyltransferase N-terminal domain"/>
    <property type="match status" value="1"/>
</dbReference>
<reference key="1">
    <citation type="journal article" date="2008" name="Proc. Natl. Acad. Sci. U.S.A.">
        <title>Nitrogen fixation island and rhizosphere competence traits in the genome of root-associated Pseudomonas stutzeri A1501.</title>
        <authorList>
            <person name="Yan Y."/>
            <person name="Yang J."/>
            <person name="Dou Y."/>
            <person name="Chen M."/>
            <person name="Ping S."/>
            <person name="Peng J."/>
            <person name="Lu W."/>
            <person name="Zhang W."/>
            <person name="Yao Z."/>
            <person name="Li H."/>
            <person name="Liu W."/>
            <person name="He S."/>
            <person name="Geng L."/>
            <person name="Zhang X."/>
            <person name="Yang F."/>
            <person name="Yu H."/>
            <person name="Zhan Y."/>
            <person name="Li D."/>
            <person name="Lin Z."/>
            <person name="Wang Y."/>
            <person name="Elmerich C."/>
            <person name="Lin M."/>
            <person name="Jin Q."/>
        </authorList>
    </citation>
    <scope>NUCLEOTIDE SEQUENCE [LARGE SCALE GENOMIC DNA]</scope>
    <source>
        <strain>A1501</strain>
    </source>
</reference>